<comment type="function">
    <text evidence="1">The UvrABC repair system catalyzes the recognition and processing of DNA lesions. A damage recognition complex composed of 2 UvrA and 2 UvrB subunits scans DNA for abnormalities. Upon binding of the UvrA(2)B(2) complex to a putative damaged site, the DNA wraps around one UvrB monomer. DNA wrap is dependent on ATP binding by UvrB and probably causes local melting of the DNA helix, facilitating insertion of UvrB beta-hairpin between the DNA strands. Then UvrB probes one DNA strand for the presence of a lesion. If a lesion is found the UvrA subunits dissociate and the UvrB-DNA preincision complex is formed. This complex is subsequently bound by UvrC and the second UvrB is released. If no lesion is found, the DNA wraps around the other UvrB subunit that will check the other stand for damage.</text>
</comment>
<comment type="subunit">
    <text evidence="1">Forms a heterotetramer with UvrA during the search for lesions. Interacts with UvrC in an incision complex.</text>
</comment>
<comment type="subcellular location">
    <subcellularLocation>
        <location evidence="1">Cytoplasm</location>
    </subcellularLocation>
</comment>
<comment type="domain">
    <text evidence="1">The beta-hairpin motif is involved in DNA binding.</text>
</comment>
<comment type="similarity">
    <text evidence="1">Belongs to the UvrB family.</text>
</comment>
<proteinExistence type="inferred from homology"/>
<keyword id="KW-0067">ATP-binding</keyword>
<keyword id="KW-0963">Cytoplasm</keyword>
<keyword id="KW-0227">DNA damage</keyword>
<keyword id="KW-0228">DNA excision</keyword>
<keyword id="KW-0234">DNA repair</keyword>
<keyword id="KW-0267">Excision nuclease</keyword>
<keyword id="KW-0547">Nucleotide-binding</keyword>
<keyword id="KW-1185">Reference proteome</keyword>
<keyword id="KW-0742">SOS response</keyword>
<gene>
    <name evidence="1" type="primary">uvrB</name>
    <name type="ordered locus">NE0785</name>
</gene>
<reference key="1">
    <citation type="journal article" date="2003" name="J. Bacteriol.">
        <title>Complete genome sequence of the ammonia-oxidizing bacterium and obligate chemolithoautotroph Nitrosomonas europaea.</title>
        <authorList>
            <person name="Chain P."/>
            <person name="Lamerdin J.E."/>
            <person name="Larimer F.W."/>
            <person name="Regala W."/>
            <person name="Lao V."/>
            <person name="Land M.L."/>
            <person name="Hauser L."/>
            <person name="Hooper A.B."/>
            <person name="Klotz M.G."/>
            <person name="Norton J."/>
            <person name="Sayavedra-Soto L.A."/>
            <person name="Arciero D.M."/>
            <person name="Hommes N.G."/>
            <person name="Whittaker M.M."/>
            <person name="Arp D.J."/>
        </authorList>
    </citation>
    <scope>NUCLEOTIDE SEQUENCE [LARGE SCALE GENOMIC DNA]</scope>
    <source>
        <strain>ATCC 19718 / CIP 103999 / KCTC 2705 / NBRC 14298</strain>
    </source>
</reference>
<dbReference type="EMBL" id="AL954747">
    <property type="protein sequence ID" value="CAD84696.1"/>
    <property type="molecule type" value="Genomic_DNA"/>
</dbReference>
<dbReference type="RefSeq" id="WP_011111397.1">
    <property type="nucleotide sequence ID" value="NC_004757.1"/>
</dbReference>
<dbReference type="SMR" id="Q82WA9"/>
<dbReference type="STRING" id="228410.NE0785"/>
<dbReference type="GeneID" id="87103978"/>
<dbReference type="KEGG" id="neu:NE0785"/>
<dbReference type="eggNOG" id="COG0556">
    <property type="taxonomic scope" value="Bacteria"/>
</dbReference>
<dbReference type="HOGENOM" id="CLU_009621_2_1_4"/>
<dbReference type="OrthoDB" id="9806651at2"/>
<dbReference type="PhylomeDB" id="Q82WA9"/>
<dbReference type="Proteomes" id="UP000001416">
    <property type="component" value="Chromosome"/>
</dbReference>
<dbReference type="GO" id="GO:0005737">
    <property type="term" value="C:cytoplasm"/>
    <property type="evidence" value="ECO:0007669"/>
    <property type="project" value="UniProtKB-SubCell"/>
</dbReference>
<dbReference type="GO" id="GO:0009380">
    <property type="term" value="C:excinuclease repair complex"/>
    <property type="evidence" value="ECO:0007669"/>
    <property type="project" value="InterPro"/>
</dbReference>
<dbReference type="GO" id="GO:0005524">
    <property type="term" value="F:ATP binding"/>
    <property type="evidence" value="ECO:0007669"/>
    <property type="project" value="UniProtKB-UniRule"/>
</dbReference>
<dbReference type="GO" id="GO:0016887">
    <property type="term" value="F:ATP hydrolysis activity"/>
    <property type="evidence" value="ECO:0007669"/>
    <property type="project" value="InterPro"/>
</dbReference>
<dbReference type="GO" id="GO:0003677">
    <property type="term" value="F:DNA binding"/>
    <property type="evidence" value="ECO:0007669"/>
    <property type="project" value="UniProtKB-UniRule"/>
</dbReference>
<dbReference type="GO" id="GO:0009381">
    <property type="term" value="F:excinuclease ABC activity"/>
    <property type="evidence" value="ECO:0007669"/>
    <property type="project" value="UniProtKB-UniRule"/>
</dbReference>
<dbReference type="GO" id="GO:0006289">
    <property type="term" value="P:nucleotide-excision repair"/>
    <property type="evidence" value="ECO:0007669"/>
    <property type="project" value="UniProtKB-UniRule"/>
</dbReference>
<dbReference type="GO" id="GO:0009432">
    <property type="term" value="P:SOS response"/>
    <property type="evidence" value="ECO:0007669"/>
    <property type="project" value="UniProtKB-UniRule"/>
</dbReference>
<dbReference type="CDD" id="cd17916">
    <property type="entry name" value="DEXHc_UvrB"/>
    <property type="match status" value="1"/>
</dbReference>
<dbReference type="CDD" id="cd18790">
    <property type="entry name" value="SF2_C_UvrB"/>
    <property type="match status" value="1"/>
</dbReference>
<dbReference type="FunFam" id="3.40.50.300:FF:000477">
    <property type="entry name" value="UvrABC system protein B"/>
    <property type="match status" value="1"/>
</dbReference>
<dbReference type="Gene3D" id="6.10.140.240">
    <property type="match status" value="1"/>
</dbReference>
<dbReference type="Gene3D" id="3.40.50.300">
    <property type="entry name" value="P-loop containing nucleotide triphosphate hydrolases"/>
    <property type="match status" value="3"/>
</dbReference>
<dbReference type="Gene3D" id="4.10.860.10">
    <property type="entry name" value="UVR domain"/>
    <property type="match status" value="1"/>
</dbReference>
<dbReference type="HAMAP" id="MF_00204">
    <property type="entry name" value="UvrB"/>
    <property type="match status" value="1"/>
</dbReference>
<dbReference type="InterPro" id="IPR006935">
    <property type="entry name" value="Helicase/UvrB_N"/>
</dbReference>
<dbReference type="InterPro" id="IPR014001">
    <property type="entry name" value="Helicase_ATP-bd"/>
</dbReference>
<dbReference type="InterPro" id="IPR001650">
    <property type="entry name" value="Helicase_C-like"/>
</dbReference>
<dbReference type="InterPro" id="IPR027417">
    <property type="entry name" value="P-loop_NTPase"/>
</dbReference>
<dbReference type="InterPro" id="IPR001943">
    <property type="entry name" value="UVR_dom"/>
</dbReference>
<dbReference type="InterPro" id="IPR036876">
    <property type="entry name" value="UVR_dom_sf"/>
</dbReference>
<dbReference type="InterPro" id="IPR004807">
    <property type="entry name" value="UvrB"/>
</dbReference>
<dbReference type="InterPro" id="IPR041471">
    <property type="entry name" value="UvrB_inter"/>
</dbReference>
<dbReference type="InterPro" id="IPR024759">
    <property type="entry name" value="UvrB_YAD/RRR_dom"/>
</dbReference>
<dbReference type="NCBIfam" id="NF003673">
    <property type="entry name" value="PRK05298.1"/>
    <property type="match status" value="1"/>
</dbReference>
<dbReference type="NCBIfam" id="TIGR00631">
    <property type="entry name" value="uvrb"/>
    <property type="match status" value="1"/>
</dbReference>
<dbReference type="PANTHER" id="PTHR24029">
    <property type="entry name" value="UVRABC SYSTEM PROTEIN B"/>
    <property type="match status" value="1"/>
</dbReference>
<dbReference type="PANTHER" id="PTHR24029:SF0">
    <property type="entry name" value="UVRABC SYSTEM PROTEIN B"/>
    <property type="match status" value="1"/>
</dbReference>
<dbReference type="Pfam" id="PF00271">
    <property type="entry name" value="Helicase_C"/>
    <property type="match status" value="1"/>
</dbReference>
<dbReference type="Pfam" id="PF04851">
    <property type="entry name" value="ResIII"/>
    <property type="match status" value="1"/>
</dbReference>
<dbReference type="Pfam" id="PF02151">
    <property type="entry name" value="UVR"/>
    <property type="match status" value="1"/>
</dbReference>
<dbReference type="Pfam" id="PF12344">
    <property type="entry name" value="UvrB"/>
    <property type="match status" value="1"/>
</dbReference>
<dbReference type="Pfam" id="PF17757">
    <property type="entry name" value="UvrB_inter"/>
    <property type="match status" value="1"/>
</dbReference>
<dbReference type="SMART" id="SM00487">
    <property type="entry name" value="DEXDc"/>
    <property type="match status" value="1"/>
</dbReference>
<dbReference type="SMART" id="SM00490">
    <property type="entry name" value="HELICc"/>
    <property type="match status" value="1"/>
</dbReference>
<dbReference type="SUPFAM" id="SSF46600">
    <property type="entry name" value="C-terminal UvrC-binding domain of UvrB"/>
    <property type="match status" value="1"/>
</dbReference>
<dbReference type="SUPFAM" id="SSF52540">
    <property type="entry name" value="P-loop containing nucleoside triphosphate hydrolases"/>
    <property type="match status" value="2"/>
</dbReference>
<dbReference type="PROSITE" id="PS51192">
    <property type="entry name" value="HELICASE_ATP_BIND_1"/>
    <property type="match status" value="1"/>
</dbReference>
<dbReference type="PROSITE" id="PS51194">
    <property type="entry name" value="HELICASE_CTER"/>
    <property type="match status" value="1"/>
</dbReference>
<dbReference type="PROSITE" id="PS50151">
    <property type="entry name" value="UVR"/>
    <property type="match status" value="1"/>
</dbReference>
<name>UVRB_NITEU</name>
<feature type="chain" id="PRO_0000227334" description="UvrABC system protein B">
    <location>
        <begin position="1"/>
        <end position="695"/>
    </location>
</feature>
<feature type="domain" description="Helicase ATP-binding" evidence="1">
    <location>
        <begin position="31"/>
        <end position="414"/>
    </location>
</feature>
<feature type="domain" description="Helicase C-terminal" evidence="1">
    <location>
        <begin position="435"/>
        <end position="601"/>
    </location>
</feature>
<feature type="domain" description="UVR" evidence="1">
    <location>
        <begin position="632"/>
        <end position="667"/>
    </location>
</feature>
<feature type="short sequence motif" description="Beta-hairpin">
    <location>
        <begin position="97"/>
        <end position="120"/>
    </location>
</feature>
<feature type="binding site" evidence="1">
    <location>
        <begin position="44"/>
        <end position="51"/>
    </location>
    <ligand>
        <name>ATP</name>
        <dbReference type="ChEBI" id="CHEBI:30616"/>
    </ligand>
</feature>
<protein>
    <recommendedName>
        <fullName evidence="1">UvrABC system protein B</fullName>
        <shortName evidence="1">Protein UvrB</shortName>
    </recommendedName>
    <alternativeName>
        <fullName evidence="1">Excinuclease ABC subunit B</fullName>
    </alternativeName>
</protein>
<accession>Q82WA9</accession>
<evidence type="ECO:0000255" key="1">
    <source>
        <dbReference type="HAMAP-Rule" id="MF_00204"/>
    </source>
</evidence>
<organism>
    <name type="scientific">Nitrosomonas europaea (strain ATCC 19718 / CIP 103999 / KCTC 2705 / NBRC 14298)</name>
    <dbReference type="NCBI Taxonomy" id="228410"/>
    <lineage>
        <taxon>Bacteria</taxon>
        <taxon>Pseudomonadati</taxon>
        <taxon>Pseudomonadota</taxon>
        <taxon>Betaproteobacteria</taxon>
        <taxon>Nitrosomonadales</taxon>
        <taxon>Nitrosomonadaceae</taxon>
        <taxon>Nitrosomonas</taxon>
    </lineage>
</organism>
<sequence length="695" mass="79423">MIITFPGSPYKLNQAFQPAGDQPEAIRILVEGIESGLSFQTLLGVTGSGKTFTIANMIARLGRPAIIMAPNKTLAAQLYAEMREFFPENAVEYFVSYYDYYQPEAYVPSRDLFIEKDSSINEHIEQMRLSATKSLLEREDAIIVATVSCIYGIGDPVDYHGMILHVREHEKISQRDIIQRLTGMQYQRNEFEFARGTFRVRGDVLDVFPAENSETALRISLFDDEVESMTLFDPLTGQTRQKVSRYTVYPSSHYVTPRSTTLRAIETIKTELTGRLNYFHENHKLVEAQRLEQRTRFDLEMLNELGFCKGIENYSRHLSGRQPGDPPPTLIDYLPDNALMIIDESHVTVPQIGGMYKGDRSRKENLVAYGFRLPSALDNRPLRFEEFEKLMPQTIFVSATPADYEIQRSGQIAEQVVRPTGLVDPVIIIRPVTTQVDDLMSEVSLRAAQNERVLVTTLTKRMAEDLTDYFSDHGIRVRYLHSDIDTVERVEIIRDLRLGKFDVLVGINLLREGLDIPEVSLVGILDADKEGFLRSERSLIQTMGRAARHVNGTVILYADKITNSMRRAIDETERRRNKQKLFNQQNNITPRGVNKRIKDLIDGVYDSENAAEHRKVAQIQARYAAMDEAQLAKEIQRLEKSMLEAARNMEFEQAAQYRDEIKNLRSKLFIGIIDPDEIREVPQTAGKKSRRKAGR</sequence>